<name>SSG1_PEA</name>
<evidence type="ECO:0000250" key="1"/>
<evidence type="ECO:0000269" key="2">
    <source>
    </source>
</evidence>
<evidence type="ECO:0000305" key="3"/>
<feature type="transit peptide" description="Chloroplast" evidence="2">
    <location>
        <begin position="1"/>
        <end position="75"/>
    </location>
</feature>
<feature type="chain" id="PRO_0000011133" description="Granule-bound starch synthase 1, chloroplastic/amyloplastic">
    <location>
        <begin position="76"/>
        <end position="603"/>
    </location>
</feature>
<feature type="binding site" evidence="1">
    <location>
        <position position="91"/>
    </location>
    <ligand>
        <name>ADP-alpha-D-glucose</name>
        <dbReference type="ChEBI" id="CHEBI:57498"/>
    </ligand>
</feature>
<accession>Q43092</accession>
<comment type="function">
    <text>May be responsible for the synthesis of amylose.</text>
</comment>
<comment type="catalytic activity">
    <reaction>
        <text>an NDP-alpha-D-glucose + [(1-&gt;4)-alpha-D-glucosyl](n) = [(1-&gt;4)-alpha-D-glucosyl](n+1) + a ribonucleoside 5'-diphosphate + H(+)</text>
        <dbReference type="Rhea" id="RHEA:15873"/>
        <dbReference type="Rhea" id="RHEA-COMP:9584"/>
        <dbReference type="Rhea" id="RHEA-COMP:9587"/>
        <dbReference type="ChEBI" id="CHEBI:15378"/>
        <dbReference type="ChEBI" id="CHEBI:15444"/>
        <dbReference type="ChEBI" id="CHEBI:57930"/>
        <dbReference type="ChEBI" id="CHEBI:76533"/>
        <dbReference type="EC" id="2.4.1.242"/>
    </reaction>
</comment>
<comment type="pathway">
    <text>Glycan biosynthesis; starch biosynthesis.</text>
</comment>
<comment type="subcellular location">
    <subcellularLocation>
        <location>Plastid</location>
        <location>Chloroplast</location>
    </subcellularLocation>
    <subcellularLocation>
        <location>Plastid</location>
        <location>Amyloplast</location>
    </subcellularLocation>
    <text>Amyloplast or chloroplast, granule-bound.</text>
</comment>
<comment type="tissue specificity">
    <text>Expressed in pods and leaves. No expression in flowers or stipules.</text>
</comment>
<comment type="developmental stage">
    <text>Expressed at all stages of embryonic development with highest levels in later developmental stages.</text>
</comment>
<comment type="similarity">
    <text evidence="3">Belongs to the glycosyltransferase 1 family. Bacterial/plant glycogen synthase subfamily.</text>
</comment>
<organism>
    <name type="scientific">Pisum sativum</name>
    <name type="common">Garden pea</name>
    <name type="synonym">Lathyrus oleraceus</name>
    <dbReference type="NCBI Taxonomy" id="3888"/>
    <lineage>
        <taxon>Eukaryota</taxon>
        <taxon>Viridiplantae</taxon>
        <taxon>Streptophyta</taxon>
        <taxon>Embryophyta</taxon>
        <taxon>Tracheophyta</taxon>
        <taxon>Spermatophyta</taxon>
        <taxon>Magnoliopsida</taxon>
        <taxon>eudicotyledons</taxon>
        <taxon>Gunneridae</taxon>
        <taxon>Pentapetalae</taxon>
        <taxon>rosids</taxon>
        <taxon>fabids</taxon>
        <taxon>Fabales</taxon>
        <taxon>Fabaceae</taxon>
        <taxon>Papilionoideae</taxon>
        <taxon>50 kb inversion clade</taxon>
        <taxon>NPAAA clade</taxon>
        <taxon>Hologalegina</taxon>
        <taxon>IRL clade</taxon>
        <taxon>Fabeae</taxon>
        <taxon>Pisum</taxon>
    </lineage>
</organism>
<keyword id="KW-0035">Amyloplast</keyword>
<keyword id="KW-0150">Chloroplast</keyword>
<keyword id="KW-0903">Direct protein sequencing</keyword>
<keyword id="KW-0328">Glycosyltransferase</keyword>
<keyword id="KW-0934">Plastid</keyword>
<keyword id="KW-0750">Starch biosynthesis</keyword>
<keyword id="KW-0808">Transferase</keyword>
<keyword id="KW-0809">Transit peptide</keyword>
<protein>
    <recommendedName>
        <fullName>Granule-bound starch synthase 1, chloroplastic/amyloplastic</fullName>
        <ecNumber>2.4.1.242</ecNumber>
    </recommendedName>
    <alternativeName>
        <fullName>Granule-bound starch synthase I</fullName>
        <shortName>GBSS-I</shortName>
    </alternativeName>
</protein>
<dbReference type="EC" id="2.4.1.242"/>
<dbReference type="EMBL" id="X88789">
    <property type="protein sequence ID" value="CAA61268.1"/>
    <property type="molecule type" value="mRNA"/>
</dbReference>
<dbReference type="PIR" id="S61504">
    <property type="entry name" value="S61504"/>
</dbReference>
<dbReference type="SMR" id="Q43092"/>
<dbReference type="CAZy" id="GT5">
    <property type="family name" value="Glycosyltransferase Family 5"/>
</dbReference>
<dbReference type="UniPathway" id="UPA00152"/>
<dbReference type="GO" id="GO:0009501">
    <property type="term" value="C:amyloplast"/>
    <property type="evidence" value="ECO:0007669"/>
    <property type="project" value="UniProtKB-SubCell"/>
</dbReference>
<dbReference type="GO" id="GO:0009507">
    <property type="term" value="C:chloroplast"/>
    <property type="evidence" value="ECO:0007669"/>
    <property type="project" value="UniProtKB-SubCell"/>
</dbReference>
<dbReference type="GO" id="GO:0004373">
    <property type="term" value="F:alpha-1,4-glucan glucosyltransferase (UDP-glucose donor) activity"/>
    <property type="evidence" value="ECO:0007669"/>
    <property type="project" value="InterPro"/>
</dbReference>
<dbReference type="GO" id="GO:0019252">
    <property type="term" value="P:starch biosynthetic process"/>
    <property type="evidence" value="ECO:0007669"/>
    <property type="project" value="UniProtKB-UniPathway"/>
</dbReference>
<dbReference type="CDD" id="cd03791">
    <property type="entry name" value="GT5_Glycogen_synthase_DULL1-like"/>
    <property type="match status" value="1"/>
</dbReference>
<dbReference type="FunFam" id="3.40.50.2000:FF:000073">
    <property type="entry name" value="Starch synthase, chloroplastic/amyloplastic"/>
    <property type="match status" value="1"/>
</dbReference>
<dbReference type="FunFam" id="3.40.50.2000:FF:000090">
    <property type="entry name" value="Starch synthase, chloroplastic/amyloplastic"/>
    <property type="match status" value="1"/>
</dbReference>
<dbReference type="Gene3D" id="3.40.50.2000">
    <property type="entry name" value="Glycogen Phosphorylase B"/>
    <property type="match status" value="2"/>
</dbReference>
<dbReference type="HAMAP" id="MF_00484">
    <property type="entry name" value="Glycogen_synth"/>
    <property type="match status" value="1"/>
</dbReference>
<dbReference type="InterPro" id="IPR001296">
    <property type="entry name" value="Glyco_trans_1"/>
</dbReference>
<dbReference type="InterPro" id="IPR011835">
    <property type="entry name" value="GS/SS"/>
</dbReference>
<dbReference type="InterPro" id="IPR013534">
    <property type="entry name" value="Starch_synth_cat_dom"/>
</dbReference>
<dbReference type="NCBIfam" id="TIGR02095">
    <property type="entry name" value="glgA"/>
    <property type="match status" value="1"/>
</dbReference>
<dbReference type="PANTHER" id="PTHR45825">
    <property type="entry name" value="GRANULE-BOUND STARCH SYNTHASE 1, CHLOROPLASTIC/AMYLOPLASTIC"/>
    <property type="match status" value="1"/>
</dbReference>
<dbReference type="PANTHER" id="PTHR45825:SF3">
    <property type="entry name" value="GRANULE-BOUND STARCH SYNTHASE 1, CHLOROPLASTIC_AMYLOPLASTIC"/>
    <property type="match status" value="1"/>
</dbReference>
<dbReference type="Pfam" id="PF08323">
    <property type="entry name" value="Glyco_transf_5"/>
    <property type="match status" value="1"/>
</dbReference>
<dbReference type="Pfam" id="PF00534">
    <property type="entry name" value="Glycos_transf_1"/>
    <property type="match status" value="1"/>
</dbReference>
<dbReference type="SUPFAM" id="SSF53756">
    <property type="entry name" value="UDP-Glycosyltransferase/glycogen phosphorylase"/>
    <property type="match status" value="1"/>
</dbReference>
<sequence length="603" mass="66362">MATITGSSMPTRTACFNYQGRSAESKLNLPQIHFNNNQAFPVLGLRSLNKLHVRTARATSGSSDTSEKSLGKIVCGMSLVFVGAEVGPWSKTGGLGDVLGGLPPVLAGNGHRVMTVSPRYDQYKDAWDTNVLVEVKVGDKIETVRFFHCYKRGVDRVFVDHPLFLERVWGKTGSKLYGPKTGIDYRDNQLRFSLLCQAALEAPRVLNLNSSKYFSGPYGEDVIFVANDWHSALIPCYLKSMYKSRGLYKNAKVAFCIHNIAYQGRNAFSDFSLLNLPDEFRSSFDFIDGYNKPCEGKKINWMKAGILESDQVFTVSPHYAKELISGEDRGVELDNIIRSTGIIGIVNGMDNREWSPQTDRYIDVHYNETTVTEAKPLLKGTLQAEIGLPVDSSIPLIGFIGRLEEQKGSDILVEAIAKFADENVQIVVLGTGKKIMEKQIEVLEEKYPGKAIGITKFNSPLAHKIIAGADFIVIPSRFEPCGLVQLHAMPYGTVPIVSSTGGLVDTVKEGYTGFHAGPFDVECEDVDPDDVDKLAATVKRALKTYGTQAMKQIILNCMAQNFSWKKPAKLWEKALLNLEVTGNVAGIDGDEIAPLAKENVATP</sequence>
<reference key="1">
    <citation type="journal article" date="1992" name="Plant J.">
        <title>Characterization of cDNAs encoding two isoforms of granule-bound starch synthase which show differential expression in developing storage organs of pea and potato.</title>
        <authorList>
            <person name="Dry I."/>
            <person name="Smith A."/>
            <person name="Edwards A."/>
            <person name="Bhattacharyya B."/>
            <person name="Dunn P."/>
            <person name="Martin C."/>
        </authorList>
    </citation>
    <scope>NUCLEOTIDE SEQUENCE [MRNA]</scope>
    <scope>PROTEIN SEQUENCE OF 76-88</scope>
    <source>
        <strain>cv. BC1/RR</strain>
        <tissue>Embryo</tissue>
    </source>
</reference>
<proteinExistence type="evidence at protein level"/>